<gene>
    <name evidence="11" type="primary">Son</name>
    <name evidence="6 7 11" type="synonym">dsn</name>
    <name evidence="11" type="ORF">CG8273</name>
</gene>
<protein>
    <recommendedName>
        <fullName evidence="8">Protein Son</fullName>
    </recommendedName>
    <alternativeName>
        <fullName evidence="11">RNA-binding protein Son</fullName>
    </alternativeName>
</protein>
<proteinExistence type="evidence at protein level"/>
<name>SON_DROME</name>
<dbReference type="EMBL" id="AE014297">
    <property type="protein sequence ID" value="AAF54409.1"/>
    <property type="molecule type" value="Genomic_DNA"/>
</dbReference>
<dbReference type="EMBL" id="AE014297">
    <property type="protein sequence ID" value="AGB95808.1"/>
    <property type="molecule type" value="Genomic_DNA"/>
</dbReference>
<dbReference type="EMBL" id="AY118833">
    <property type="protein sequence ID" value="AAM50693.1"/>
    <property type="status" value="ALT_INIT"/>
    <property type="molecule type" value="mRNA"/>
</dbReference>
<dbReference type="EMBL" id="BT001332">
    <property type="protein sequence ID" value="AAN71087.1"/>
    <property type="molecule type" value="mRNA"/>
</dbReference>
<dbReference type="RefSeq" id="NP_001262426.1">
    <property type="nucleotide sequence ID" value="NM_001275497.1"/>
</dbReference>
<dbReference type="RefSeq" id="NP_649914.1">
    <property type="nucleotide sequence ID" value="NM_141657.4"/>
</dbReference>
<dbReference type="SMR" id="Q9VHB0"/>
<dbReference type="FunCoup" id="Q9VHB0">
    <property type="interactions" value="44"/>
</dbReference>
<dbReference type="IntAct" id="Q9VHB0">
    <property type="interactions" value="6"/>
</dbReference>
<dbReference type="STRING" id="7227.FBpp0081550"/>
<dbReference type="GlyGen" id="Q9VHB0">
    <property type="glycosylation" value="2 sites"/>
</dbReference>
<dbReference type="PaxDb" id="7227-FBpp0081550"/>
<dbReference type="ABCD" id="Q9VHB0">
    <property type="antibodies" value="3 sequenced antibodies"/>
</dbReference>
<dbReference type="EnsemblMetazoa" id="FBtr0082072">
    <property type="protein sequence ID" value="FBpp0081550"/>
    <property type="gene ID" value="FBgn0037716"/>
</dbReference>
<dbReference type="EnsemblMetazoa" id="FBtr0334655">
    <property type="protein sequence ID" value="FBpp0306717"/>
    <property type="gene ID" value="FBgn0037716"/>
</dbReference>
<dbReference type="GeneID" id="41159"/>
<dbReference type="KEGG" id="dme:Dmel_CG8273"/>
<dbReference type="UCSC" id="CG8273-RA">
    <property type="organism name" value="d. melanogaster"/>
</dbReference>
<dbReference type="AGR" id="FB:FBgn0037716"/>
<dbReference type="CTD" id="6651"/>
<dbReference type="FlyBase" id="FBgn0037716">
    <property type="gene designation" value="Son"/>
</dbReference>
<dbReference type="VEuPathDB" id="VectorBase:FBgn0037716"/>
<dbReference type="eggNOG" id="ENOG502QPQ7">
    <property type="taxonomic scope" value="Eukaryota"/>
</dbReference>
<dbReference type="GeneTree" id="ENSGT00730000111141"/>
<dbReference type="HOGENOM" id="CLU_015129_0_0_1"/>
<dbReference type="InParanoid" id="Q9VHB0"/>
<dbReference type="OMA" id="LPNMAMN"/>
<dbReference type="OrthoDB" id="786951at2759"/>
<dbReference type="PhylomeDB" id="Q9VHB0"/>
<dbReference type="SignaLink" id="Q9VHB0"/>
<dbReference type="BioGRID-ORCS" id="41159">
    <property type="hits" value="0 hits in 1 CRISPR screen"/>
</dbReference>
<dbReference type="GenomeRNAi" id="41159"/>
<dbReference type="PRO" id="PR:Q9VHB0"/>
<dbReference type="Proteomes" id="UP000000803">
    <property type="component" value="Chromosome 3R"/>
</dbReference>
<dbReference type="Bgee" id="FBgn0037716">
    <property type="expression patterns" value="Expressed in spermatocyte in testis and 184 other cell types or tissues"/>
</dbReference>
<dbReference type="GO" id="GO:0005634">
    <property type="term" value="C:nucleus"/>
    <property type="evidence" value="ECO:0007669"/>
    <property type="project" value="UniProtKB-SubCell"/>
</dbReference>
<dbReference type="GO" id="GO:0003725">
    <property type="term" value="F:double-stranded RNA binding"/>
    <property type="evidence" value="ECO:0000250"/>
    <property type="project" value="FlyBase"/>
</dbReference>
<dbReference type="GO" id="GO:0003723">
    <property type="term" value="F:RNA binding"/>
    <property type="evidence" value="ECO:0000318"/>
    <property type="project" value="GO_Central"/>
</dbReference>
<dbReference type="GO" id="GO:0036099">
    <property type="term" value="P:female germ-line stem cell population maintenance"/>
    <property type="evidence" value="ECO:0000315"/>
    <property type="project" value="UniProtKB"/>
</dbReference>
<dbReference type="GO" id="GO:0010629">
    <property type="term" value="P:negative regulation of gene expression"/>
    <property type="evidence" value="ECO:0000315"/>
    <property type="project" value="UniProtKB"/>
</dbReference>
<dbReference type="GO" id="GO:0033234">
    <property type="term" value="P:negative regulation of protein sumoylation"/>
    <property type="evidence" value="ECO:0000315"/>
    <property type="project" value="UniProtKB"/>
</dbReference>
<dbReference type="GO" id="GO:1990261">
    <property type="term" value="P:pre-mRNA catabolic process"/>
    <property type="evidence" value="ECO:0000316"/>
    <property type="project" value="UniProtKB"/>
</dbReference>
<dbReference type="GO" id="GO:0051726">
    <property type="term" value="P:regulation of cell cycle"/>
    <property type="evidence" value="ECO:0007669"/>
    <property type="project" value="InterPro"/>
</dbReference>
<dbReference type="GO" id="GO:0048024">
    <property type="term" value="P:regulation of mRNA splicing, via spliceosome"/>
    <property type="evidence" value="ECO:0000318"/>
    <property type="project" value="GO_Central"/>
</dbReference>
<dbReference type="GO" id="GO:2000036">
    <property type="term" value="P:regulation of stem cell population maintenance"/>
    <property type="evidence" value="ECO:0000316"/>
    <property type="project" value="UniProtKB"/>
</dbReference>
<dbReference type="CDD" id="cd19870">
    <property type="entry name" value="DSRM_SON-like"/>
    <property type="match status" value="1"/>
</dbReference>
<dbReference type="Gene3D" id="3.30.160.20">
    <property type="match status" value="1"/>
</dbReference>
<dbReference type="InterPro" id="IPR014720">
    <property type="entry name" value="dsRBD_dom"/>
</dbReference>
<dbReference type="InterPro" id="IPR000467">
    <property type="entry name" value="G_patch_dom"/>
</dbReference>
<dbReference type="InterPro" id="IPR032922">
    <property type="entry name" value="SON"/>
</dbReference>
<dbReference type="PANTHER" id="PTHR46528">
    <property type="entry name" value="PROTEIN SON"/>
    <property type="match status" value="1"/>
</dbReference>
<dbReference type="PANTHER" id="PTHR46528:SF1">
    <property type="entry name" value="PROTEIN SON"/>
    <property type="match status" value="1"/>
</dbReference>
<dbReference type="Pfam" id="PF00035">
    <property type="entry name" value="dsrm"/>
    <property type="match status" value="1"/>
</dbReference>
<dbReference type="Pfam" id="PF01585">
    <property type="entry name" value="G-patch"/>
    <property type="match status" value="1"/>
</dbReference>
<dbReference type="SMART" id="SM00358">
    <property type="entry name" value="DSRM"/>
    <property type="match status" value="1"/>
</dbReference>
<dbReference type="SMART" id="SM00443">
    <property type="entry name" value="G_patch"/>
    <property type="match status" value="1"/>
</dbReference>
<dbReference type="SUPFAM" id="SSF54768">
    <property type="entry name" value="dsRNA-binding domain-like"/>
    <property type="match status" value="1"/>
</dbReference>
<dbReference type="PROSITE" id="PS50137">
    <property type="entry name" value="DS_RBD"/>
    <property type="match status" value="1"/>
</dbReference>
<dbReference type="PROSITE" id="PS50174">
    <property type="entry name" value="G_PATCH"/>
    <property type="match status" value="1"/>
</dbReference>
<keyword id="KW-0539">Nucleus</keyword>
<keyword id="KW-1185">Reference proteome</keyword>
<keyword id="KW-0694">RNA-binding</keyword>
<accession>Q9VHB0</accession>
<accession>Q8IHA8</accession>
<accession>Q8MSG7</accession>
<comment type="function">
    <text evidence="4 5">RNA-binding protein that protects nascent transcripts containing intronic transposable sequences, known as INE-1, from being degraded by DIP1 (PubMed:31730657). Modulates DIP1 activity by repressing its sumoylation levels (PubMed:31730657). This ensures that intronic sequences will be degradated only after splicing (PubMed:31730657). In the ovaries, regulates germline stem cells (GSCs) self-renewal by repressing the expression of the GSC differentiation-promoting factor Rga (PubMed:29887366).</text>
</comment>
<comment type="subcellular location">
    <subcellularLocation>
        <location evidence="5">Nucleus</location>
    </subcellularLocation>
    <text evidence="5">Localizes to DIP1-positive nuclear bodies known as satellite bodies.</text>
</comment>
<comment type="tissue specificity">
    <text evidence="4 5">Expressed in ovarian nurse cells (at protein level).</text>
</comment>
<comment type="disruption phenotype">
    <text evidence="4 5">Results in a progressing reduction in egg laying accompanied by a decrease in number of germline stem cells (GSCs) (PubMed:29887366). In the ovaries, results in an increase of Rga pre-mRNA (PubMed:29887366). Results in a decrease in the levels and stability of mRNA and INE-1-containing pre-RNA (PubMed:31730657). Might reduce levels of DIP1 sumoylation (PubMed:31730657). RNAi-mediated knockdown in the germline results in loss of GSCs (PubMed:29887366).</text>
</comment>
<comment type="sequence caution" evidence="8">
    <conflict type="erroneous initiation">
        <sequence resource="EMBL-CDS" id="AAM50693"/>
    </conflict>
    <text>Truncated N-terminus.</text>
</comment>
<organism evidence="12">
    <name type="scientific">Drosophila melanogaster</name>
    <name type="common">Fruit fly</name>
    <dbReference type="NCBI Taxonomy" id="7227"/>
    <lineage>
        <taxon>Eukaryota</taxon>
        <taxon>Metazoa</taxon>
        <taxon>Ecdysozoa</taxon>
        <taxon>Arthropoda</taxon>
        <taxon>Hexapoda</taxon>
        <taxon>Insecta</taxon>
        <taxon>Pterygota</taxon>
        <taxon>Neoptera</taxon>
        <taxon>Endopterygota</taxon>
        <taxon>Diptera</taxon>
        <taxon>Brachycera</taxon>
        <taxon>Muscomorpha</taxon>
        <taxon>Ephydroidea</taxon>
        <taxon>Drosophilidae</taxon>
        <taxon>Drosophila</taxon>
        <taxon>Sophophora</taxon>
    </lineage>
</organism>
<reference evidence="12" key="1">
    <citation type="journal article" date="2000" name="Science">
        <title>The genome sequence of Drosophila melanogaster.</title>
        <authorList>
            <person name="Adams M.D."/>
            <person name="Celniker S.E."/>
            <person name="Holt R.A."/>
            <person name="Evans C.A."/>
            <person name="Gocayne J.D."/>
            <person name="Amanatides P.G."/>
            <person name="Scherer S.E."/>
            <person name="Li P.W."/>
            <person name="Hoskins R.A."/>
            <person name="Galle R.F."/>
            <person name="George R.A."/>
            <person name="Lewis S.E."/>
            <person name="Richards S."/>
            <person name="Ashburner M."/>
            <person name="Henderson S.N."/>
            <person name="Sutton G.G."/>
            <person name="Wortman J.R."/>
            <person name="Yandell M.D."/>
            <person name="Zhang Q."/>
            <person name="Chen L.X."/>
            <person name="Brandon R.C."/>
            <person name="Rogers Y.-H.C."/>
            <person name="Blazej R.G."/>
            <person name="Champe M."/>
            <person name="Pfeiffer B.D."/>
            <person name="Wan K.H."/>
            <person name="Doyle C."/>
            <person name="Baxter E.G."/>
            <person name="Helt G."/>
            <person name="Nelson C.R."/>
            <person name="Miklos G.L.G."/>
            <person name="Abril J.F."/>
            <person name="Agbayani A."/>
            <person name="An H.-J."/>
            <person name="Andrews-Pfannkoch C."/>
            <person name="Baldwin D."/>
            <person name="Ballew R.M."/>
            <person name="Basu A."/>
            <person name="Baxendale J."/>
            <person name="Bayraktaroglu L."/>
            <person name="Beasley E.M."/>
            <person name="Beeson K.Y."/>
            <person name="Benos P.V."/>
            <person name="Berman B.P."/>
            <person name="Bhandari D."/>
            <person name="Bolshakov S."/>
            <person name="Borkova D."/>
            <person name="Botchan M.R."/>
            <person name="Bouck J."/>
            <person name="Brokstein P."/>
            <person name="Brottier P."/>
            <person name="Burtis K.C."/>
            <person name="Busam D.A."/>
            <person name="Butler H."/>
            <person name="Cadieu E."/>
            <person name="Center A."/>
            <person name="Chandra I."/>
            <person name="Cherry J.M."/>
            <person name="Cawley S."/>
            <person name="Dahlke C."/>
            <person name="Davenport L.B."/>
            <person name="Davies P."/>
            <person name="de Pablos B."/>
            <person name="Delcher A."/>
            <person name="Deng Z."/>
            <person name="Mays A.D."/>
            <person name="Dew I."/>
            <person name="Dietz S.M."/>
            <person name="Dodson K."/>
            <person name="Doup L.E."/>
            <person name="Downes M."/>
            <person name="Dugan-Rocha S."/>
            <person name="Dunkov B.C."/>
            <person name="Dunn P."/>
            <person name="Durbin K.J."/>
            <person name="Evangelista C.C."/>
            <person name="Ferraz C."/>
            <person name="Ferriera S."/>
            <person name="Fleischmann W."/>
            <person name="Fosler C."/>
            <person name="Gabrielian A.E."/>
            <person name="Garg N.S."/>
            <person name="Gelbart W.M."/>
            <person name="Glasser K."/>
            <person name="Glodek A."/>
            <person name="Gong F."/>
            <person name="Gorrell J.H."/>
            <person name="Gu Z."/>
            <person name="Guan P."/>
            <person name="Harris M."/>
            <person name="Harris N.L."/>
            <person name="Harvey D.A."/>
            <person name="Heiman T.J."/>
            <person name="Hernandez J.R."/>
            <person name="Houck J."/>
            <person name="Hostin D."/>
            <person name="Houston K.A."/>
            <person name="Howland T.J."/>
            <person name="Wei M.-H."/>
            <person name="Ibegwam C."/>
            <person name="Jalali M."/>
            <person name="Kalush F."/>
            <person name="Karpen G.H."/>
            <person name="Ke Z."/>
            <person name="Kennison J.A."/>
            <person name="Ketchum K.A."/>
            <person name="Kimmel B.E."/>
            <person name="Kodira C.D."/>
            <person name="Kraft C.L."/>
            <person name="Kravitz S."/>
            <person name="Kulp D."/>
            <person name="Lai Z."/>
            <person name="Lasko P."/>
            <person name="Lei Y."/>
            <person name="Levitsky A.A."/>
            <person name="Li J.H."/>
            <person name="Li Z."/>
            <person name="Liang Y."/>
            <person name="Lin X."/>
            <person name="Liu X."/>
            <person name="Mattei B."/>
            <person name="McIntosh T.C."/>
            <person name="McLeod M.P."/>
            <person name="McPherson D."/>
            <person name="Merkulov G."/>
            <person name="Milshina N.V."/>
            <person name="Mobarry C."/>
            <person name="Morris J."/>
            <person name="Moshrefi A."/>
            <person name="Mount S.M."/>
            <person name="Moy M."/>
            <person name="Murphy B."/>
            <person name="Murphy L."/>
            <person name="Muzny D.M."/>
            <person name="Nelson D.L."/>
            <person name="Nelson D.R."/>
            <person name="Nelson K.A."/>
            <person name="Nixon K."/>
            <person name="Nusskern D.R."/>
            <person name="Pacleb J.M."/>
            <person name="Palazzolo M."/>
            <person name="Pittman G.S."/>
            <person name="Pan S."/>
            <person name="Pollard J."/>
            <person name="Puri V."/>
            <person name="Reese M.G."/>
            <person name="Reinert K."/>
            <person name="Remington K."/>
            <person name="Saunders R.D.C."/>
            <person name="Scheeler F."/>
            <person name="Shen H."/>
            <person name="Shue B.C."/>
            <person name="Siden-Kiamos I."/>
            <person name="Simpson M."/>
            <person name="Skupski M.P."/>
            <person name="Smith T.J."/>
            <person name="Spier E."/>
            <person name="Spradling A.C."/>
            <person name="Stapleton M."/>
            <person name="Strong R."/>
            <person name="Sun E."/>
            <person name="Svirskas R."/>
            <person name="Tector C."/>
            <person name="Turner R."/>
            <person name="Venter E."/>
            <person name="Wang A.H."/>
            <person name="Wang X."/>
            <person name="Wang Z.-Y."/>
            <person name="Wassarman D.A."/>
            <person name="Weinstock G.M."/>
            <person name="Weissenbach J."/>
            <person name="Williams S.M."/>
            <person name="Woodage T."/>
            <person name="Worley K.C."/>
            <person name="Wu D."/>
            <person name="Yang S."/>
            <person name="Yao Q.A."/>
            <person name="Ye J."/>
            <person name="Yeh R.-F."/>
            <person name="Zaveri J.S."/>
            <person name="Zhan M."/>
            <person name="Zhang G."/>
            <person name="Zhao Q."/>
            <person name="Zheng L."/>
            <person name="Zheng X.H."/>
            <person name="Zhong F.N."/>
            <person name="Zhong W."/>
            <person name="Zhou X."/>
            <person name="Zhu S.C."/>
            <person name="Zhu X."/>
            <person name="Smith H.O."/>
            <person name="Gibbs R.A."/>
            <person name="Myers E.W."/>
            <person name="Rubin G.M."/>
            <person name="Venter J.C."/>
        </authorList>
    </citation>
    <scope>NUCLEOTIDE SEQUENCE [LARGE SCALE GENOMIC DNA]</scope>
    <source>
        <strain evidence="12">Berkeley</strain>
    </source>
</reference>
<reference evidence="12" key="2">
    <citation type="journal article" date="2002" name="Genome Biol.">
        <title>Annotation of the Drosophila melanogaster euchromatic genome: a systematic review.</title>
        <authorList>
            <person name="Misra S."/>
            <person name="Crosby M.A."/>
            <person name="Mungall C.J."/>
            <person name="Matthews B.B."/>
            <person name="Campbell K.S."/>
            <person name="Hradecky P."/>
            <person name="Huang Y."/>
            <person name="Kaminker J.S."/>
            <person name="Millburn G.H."/>
            <person name="Prochnik S.E."/>
            <person name="Smith C.D."/>
            <person name="Tupy J.L."/>
            <person name="Whitfield E.J."/>
            <person name="Bayraktaroglu L."/>
            <person name="Berman B.P."/>
            <person name="Bettencourt B.R."/>
            <person name="Celniker S.E."/>
            <person name="de Grey A.D.N.J."/>
            <person name="Drysdale R.A."/>
            <person name="Harris N.L."/>
            <person name="Richter J."/>
            <person name="Russo S."/>
            <person name="Schroeder A.J."/>
            <person name="Shu S.Q."/>
            <person name="Stapleton M."/>
            <person name="Yamada C."/>
            <person name="Ashburner M."/>
            <person name="Gelbart W.M."/>
            <person name="Rubin G.M."/>
            <person name="Lewis S.E."/>
        </authorList>
    </citation>
    <scope>GENOME REANNOTATION</scope>
    <source>
        <strain evidence="12">Berkeley</strain>
    </source>
</reference>
<reference evidence="9 10" key="3">
    <citation type="journal article" date="2002" name="Genome Biol.">
        <title>A Drosophila full-length cDNA resource.</title>
        <authorList>
            <person name="Stapleton M."/>
            <person name="Carlson J.W."/>
            <person name="Brokstein P."/>
            <person name="Yu C."/>
            <person name="Champe M."/>
            <person name="George R.A."/>
            <person name="Guarin H."/>
            <person name="Kronmiller B."/>
            <person name="Pacleb J.M."/>
            <person name="Park S."/>
            <person name="Wan K.H."/>
            <person name="Rubin G.M."/>
            <person name="Celniker S.E."/>
        </authorList>
    </citation>
    <scope>NUCLEOTIDE SEQUENCE [LARGE SCALE MRNA]</scope>
    <source>
        <strain evidence="9 10">Berkeley</strain>
        <tissue evidence="9">Ovary</tissue>
        <tissue evidence="10">Testis</tissue>
    </source>
</reference>
<reference evidence="8" key="4">
    <citation type="journal article" date="2018" name="Stem Cell Reports">
        <title>Germline Stem Cell Heterogeneity Supports Homeostasis in Drosophila.</title>
        <authorList>
            <person name="Ng A.Y.E."/>
            <person name="Peralta K.R.G."/>
            <person name="Pek J.W."/>
        </authorList>
    </citation>
    <scope>FUNCTION</scope>
    <scope>TISSUE SPECIFICITY</scope>
    <scope>DISRUPTION PHENOTYPE</scope>
</reference>
<reference evidence="8" key="5">
    <citation type="journal article" date="2019" name="PLoS Genet.">
        <title>SON protects nascent transcripts from unproductive degradation by counteracting DIP1.</title>
        <authorList>
            <person name="Tay M.L."/>
            <person name="Pek J.W."/>
        </authorList>
    </citation>
    <scope>FUNCTION</scope>
    <scope>SUBCELLULAR LOCATION</scope>
    <scope>TISSUE SPECIFICITY</scope>
    <scope>DISRUPTION PHENOTYPE</scope>
</reference>
<feature type="chain" id="PRO_0000449793" description="Protein Son" evidence="8">
    <location>
        <begin position="1"/>
        <end position="874"/>
    </location>
</feature>
<feature type="domain" description="G-patch" evidence="1">
    <location>
        <begin position="705"/>
        <end position="751"/>
    </location>
</feature>
<feature type="domain" description="DRBM" evidence="2">
    <location>
        <begin position="800"/>
        <end position="870"/>
    </location>
</feature>
<feature type="region of interest" description="Disordered" evidence="3">
    <location>
        <begin position="1"/>
        <end position="45"/>
    </location>
</feature>
<feature type="region of interest" description="Disordered" evidence="3">
    <location>
        <begin position="68"/>
        <end position="98"/>
    </location>
</feature>
<feature type="region of interest" description="Disordered" evidence="3">
    <location>
        <begin position="120"/>
        <end position="368"/>
    </location>
</feature>
<feature type="compositionally biased region" description="Polar residues" evidence="3">
    <location>
        <begin position="12"/>
        <end position="24"/>
    </location>
</feature>
<feature type="compositionally biased region" description="Low complexity" evidence="3">
    <location>
        <begin position="70"/>
        <end position="89"/>
    </location>
</feature>
<feature type="compositionally biased region" description="Basic residues" evidence="3">
    <location>
        <begin position="128"/>
        <end position="147"/>
    </location>
</feature>
<feature type="compositionally biased region" description="Basic residues" evidence="3">
    <location>
        <begin position="162"/>
        <end position="175"/>
    </location>
</feature>
<feature type="compositionally biased region" description="Basic and acidic residues" evidence="3">
    <location>
        <begin position="176"/>
        <end position="219"/>
    </location>
</feature>
<feature type="compositionally biased region" description="Basic and acidic residues" evidence="3">
    <location>
        <begin position="226"/>
        <end position="277"/>
    </location>
</feature>
<feature type="sequence conflict" description="In Ref. 3; AAN71087." evidence="8" ref="3">
    <original>T</original>
    <variation>P</variation>
    <location>
        <position position="21"/>
    </location>
</feature>
<feature type="sequence conflict" description="In Ref. 3; AAN71087." evidence="8" ref="3">
    <original>K</original>
    <variation>E</variation>
    <location>
        <position position="33"/>
    </location>
</feature>
<feature type="sequence conflict" description="In Ref. 3; AAN71087." evidence="8" ref="3">
    <original>E</original>
    <variation>D</variation>
    <location>
        <position position="83"/>
    </location>
</feature>
<feature type="sequence conflict" description="In Ref. 3; AAN71087." evidence="8" ref="3">
    <original>D</original>
    <variation>DKEKDRHRDRDKS</variation>
    <location>
        <position position="179"/>
    </location>
</feature>
<feature type="sequence conflict" description="In Ref. 3; AAN71087." evidence="8" ref="3">
    <original>R</original>
    <variation>Q</variation>
    <location>
        <position position="206"/>
    </location>
</feature>
<feature type="sequence conflict" description="In Ref. 3; AAM50693." evidence="8" ref="3">
    <original>Q</original>
    <variation>K</variation>
    <location>
        <position position="549"/>
    </location>
</feature>
<feature type="sequence conflict" description="In Ref. 3; AAM50693." evidence="8" ref="3">
    <original>LAS</original>
    <variation>VAP</variation>
    <location>
        <begin position="789"/>
        <end position="791"/>
    </location>
</feature>
<sequence length="874" mass="97760">MTENTEKGASVETPQVAGSQTNPPVQEPLALTKIPPIKVKSERPDAEVEAKLRAMNAKIKAEMVTLMRRSNSNELGNNDESGESESSASADDKKNIKPVKSSNEILAELFGVFNAAPPEELLDDNLFKKKKKVKKEKKDKKAKKKKTTKSDGECSDSEAEGKHKHKRKKHKHKDIRVKDKEKDRDRDKSKEKDRDRVTDKSKEKDRDRDRDRDKSKDKFTAAQAPSEKEKEKSESRKRSAVEPSSHSEKRERHEREKHRDWEREREREKEHERERVRSNNSFYNGQREADRLKGSESASTKSRQEQDLSDISLSDEESYLREKASNGRRRAHNSFYDEKEELSVSPKRNVRESNTRRNRKSRSRSRDLGIDKKRLLEIARRNAINMFKQGTMPGVANMTAEVKDKVLVKMRYGGRTIQDLTDFCKKISNGDGLSDLSSEEESDVDKNGNAKVFHHPFQLKEREPIVMHIRNSTALVPAPPRLDEQTKAITMQFPVSSGQTHRNNEVWVPVDPKDSLVPLPSLPPAKQATNMFKETPKNVFAKSIPLQEQQEPAFKPLGGAVVVPPLAATQLPTVPQSVPPTVPKEFAPPAVPFVPEVPIPSTSPVTPMQSASIFPDVTPPSMDVSSIITQRLSAIRRLQENPADSEALKMMYTAQRNMSSWANSKHLPGQFTGSTGAQVMKAHELNSGPQLWVRKDQMTSTKPVTGGMGMALLQKMGWKPGEGLGRCKTGSLQPLLLDVKLDKRGLVSRDDLRPPQMRAPAAQRRNKNMAGPIGAGPCPAVQGAGPGPLASTPLVTQDKHPVCVLNELTSKNKWMPPQYKLRQDIGPAHNRSFLFSVEINGQTFTPDRGSNNKKEAKLNAAALCLRSLGILPPS</sequence>
<evidence type="ECO:0000255" key="1">
    <source>
        <dbReference type="PROSITE-ProRule" id="PRU00092"/>
    </source>
</evidence>
<evidence type="ECO:0000255" key="2">
    <source>
        <dbReference type="PROSITE-ProRule" id="PRU00266"/>
    </source>
</evidence>
<evidence type="ECO:0000256" key="3">
    <source>
        <dbReference type="SAM" id="MobiDB-lite"/>
    </source>
</evidence>
<evidence type="ECO:0000269" key="4">
    <source>
    </source>
</evidence>
<evidence type="ECO:0000269" key="5">
    <source>
    </source>
</evidence>
<evidence type="ECO:0000303" key="6">
    <source>
    </source>
</evidence>
<evidence type="ECO:0000303" key="7">
    <source>
    </source>
</evidence>
<evidence type="ECO:0000305" key="8"/>
<evidence type="ECO:0000312" key="9">
    <source>
        <dbReference type="EMBL" id="AAM50693.1"/>
    </source>
</evidence>
<evidence type="ECO:0000312" key="10">
    <source>
        <dbReference type="EMBL" id="AAN71087.1"/>
    </source>
</evidence>
<evidence type="ECO:0000312" key="11">
    <source>
        <dbReference type="FlyBase" id="FBgn0037716"/>
    </source>
</evidence>
<evidence type="ECO:0000312" key="12">
    <source>
        <dbReference type="Proteomes" id="UP000000803"/>
    </source>
</evidence>